<evidence type="ECO:0000269" key="1">
    <source>
    </source>
</evidence>
<evidence type="ECO:0000303" key="2">
    <source>
    </source>
</evidence>
<evidence type="ECO:0000305" key="3"/>
<sequence>MAKLSLFRGCIVPNRYPGIEKATKLCLQKLEVDAVDLPGASCCPAPGVFKSFDKATWLALASRNIVLSERMGRDILTVCNGCYGSLADANIELKNDPEMKACTNSCLKEIGMEYKGTAEVRHIIEFLYKELGPEKLKSFITTPLDLKVALHYGCHLIKPSKERNLGETEAPVFFDELVEATGAKSVDYTDKMMCCGAGGGVRSGHAAESLEMLEHKLACIRNAGVDCIVNACPFCHLQFDRGQLAVNEKFGTDYSIPVLHYSQLLGLALGFSPDELGIEQNAIQNIEFLAKIYEISAGLR</sequence>
<proteinExistence type="evidence at protein level"/>
<gene>
    <name evidence="2" type="primary">hdrB2</name>
    <name type="ordered locus">MA_4237</name>
</gene>
<feature type="chain" id="PRO_0000150064" description="Ferredoxin/F(420)H(2)-dependent CoB-CoM heterodisulfide reductase subunit B">
    <location>
        <begin position="1"/>
        <end position="300"/>
    </location>
</feature>
<organism>
    <name type="scientific">Methanosarcina acetivorans (strain ATCC 35395 / DSM 2834 / JCM 12185 / C2A)</name>
    <dbReference type="NCBI Taxonomy" id="188937"/>
    <lineage>
        <taxon>Archaea</taxon>
        <taxon>Methanobacteriati</taxon>
        <taxon>Methanobacteriota</taxon>
        <taxon>Stenosarchaea group</taxon>
        <taxon>Methanomicrobia</taxon>
        <taxon>Methanosarcinales</taxon>
        <taxon>Methanosarcinaceae</taxon>
        <taxon>Methanosarcina</taxon>
    </lineage>
</organism>
<reference key="1">
    <citation type="journal article" date="2002" name="Genome Res.">
        <title>The genome of Methanosarcina acetivorans reveals extensive metabolic and physiological diversity.</title>
        <authorList>
            <person name="Galagan J.E."/>
            <person name="Nusbaum C."/>
            <person name="Roy A."/>
            <person name="Endrizzi M.G."/>
            <person name="Macdonald P."/>
            <person name="FitzHugh W."/>
            <person name="Calvo S."/>
            <person name="Engels R."/>
            <person name="Smirnov S."/>
            <person name="Atnoor D."/>
            <person name="Brown A."/>
            <person name="Allen N."/>
            <person name="Naylor J."/>
            <person name="Stange-Thomann N."/>
            <person name="DeArellano K."/>
            <person name="Johnson R."/>
            <person name="Linton L."/>
            <person name="McEwan P."/>
            <person name="McKernan K."/>
            <person name="Talamas J."/>
            <person name="Tirrell A."/>
            <person name="Ye W."/>
            <person name="Zimmer A."/>
            <person name="Barber R.D."/>
            <person name="Cann I."/>
            <person name="Graham D.E."/>
            <person name="Grahame D.A."/>
            <person name="Guss A.M."/>
            <person name="Hedderich R."/>
            <person name="Ingram-Smith C."/>
            <person name="Kuettner H.C."/>
            <person name="Krzycki J.A."/>
            <person name="Leigh J.A."/>
            <person name="Li W."/>
            <person name="Liu J."/>
            <person name="Mukhopadhyay B."/>
            <person name="Reeve J.N."/>
            <person name="Smith K."/>
            <person name="Springer T.A."/>
            <person name="Umayam L.A."/>
            <person name="White O."/>
            <person name="White R.H."/>
            <person name="de Macario E.C."/>
            <person name="Ferry J.G."/>
            <person name="Jarrell K.F."/>
            <person name="Jing H."/>
            <person name="Macario A.J.L."/>
            <person name="Paulsen I.T."/>
            <person name="Pritchett M."/>
            <person name="Sowers K.R."/>
            <person name="Swanson R.V."/>
            <person name="Zinder S.H."/>
            <person name="Lander E."/>
            <person name="Metcalf W.W."/>
            <person name="Birren B."/>
        </authorList>
    </citation>
    <scope>NUCLEOTIDE SEQUENCE [LARGE SCALE GENOMIC DNA]</scope>
    <source>
        <strain>ATCC 35395 / DSM 2834 / JCM 12185 / C2A</strain>
    </source>
</reference>
<reference key="2">
    <citation type="journal article" date="2017" name="MBio">
        <title>A ferredoxin- and F420H2-dependent, electron-bifurcating, heterodisulfide reductase with homologs in the domains Bacteria and Archaea.</title>
        <authorList>
            <person name="Yan Z."/>
            <person name="Wang M."/>
            <person name="Ferry J.G."/>
        </authorList>
    </citation>
    <scope>FUNCTION</scope>
    <scope>CATALYTIC ACTIVITY</scope>
    <scope>COFACTOR</scope>
    <scope>SUBUNIT</scope>
    <scope>SUBCELLULAR LOCATION</scope>
    <source>
        <strain>ATCC 35395 / DSM 2834 / JCM 12185 / C2A</strain>
    </source>
</reference>
<accession>Q8TIB8</accession>
<dbReference type="EC" id="1.8.7.3" evidence="1"/>
<dbReference type="EC" id="1.8.98.4" evidence="1"/>
<dbReference type="EMBL" id="AE010299">
    <property type="protein sequence ID" value="AAM07582.1"/>
    <property type="molecule type" value="Genomic_DNA"/>
</dbReference>
<dbReference type="RefSeq" id="WP_011024119.1">
    <property type="nucleotide sequence ID" value="NC_003552.1"/>
</dbReference>
<dbReference type="SMR" id="Q8TIB8"/>
<dbReference type="FunCoup" id="Q8TIB8">
    <property type="interactions" value="72"/>
</dbReference>
<dbReference type="STRING" id="188937.MA_4237"/>
<dbReference type="EnsemblBacteria" id="AAM07582">
    <property type="protein sequence ID" value="AAM07582"/>
    <property type="gene ID" value="MA_4237"/>
</dbReference>
<dbReference type="GeneID" id="1476131"/>
<dbReference type="KEGG" id="mac:MA_4237"/>
<dbReference type="HOGENOM" id="CLU_052147_1_0_2"/>
<dbReference type="InParanoid" id="Q8TIB8"/>
<dbReference type="OrthoDB" id="144689at2157"/>
<dbReference type="PhylomeDB" id="Q8TIB8"/>
<dbReference type="BioCyc" id="MetaCyc:MONOMER-20160"/>
<dbReference type="UniPathway" id="UPA00647">
    <property type="reaction ID" value="UER00700"/>
</dbReference>
<dbReference type="Proteomes" id="UP000002487">
    <property type="component" value="Chromosome"/>
</dbReference>
<dbReference type="GO" id="GO:0005737">
    <property type="term" value="C:cytoplasm"/>
    <property type="evidence" value="ECO:0007669"/>
    <property type="project" value="UniProtKB-SubCell"/>
</dbReference>
<dbReference type="GO" id="GO:0051539">
    <property type="term" value="F:4 iron, 4 sulfur cluster binding"/>
    <property type="evidence" value="ECO:0007669"/>
    <property type="project" value="UniProtKB-KW"/>
</dbReference>
<dbReference type="GO" id="GO:0051912">
    <property type="term" value="F:CoB--CoM heterodisulfide reductase activity"/>
    <property type="evidence" value="ECO:0007669"/>
    <property type="project" value="InterPro"/>
</dbReference>
<dbReference type="GO" id="GO:0046872">
    <property type="term" value="F:metal ion binding"/>
    <property type="evidence" value="ECO:0007669"/>
    <property type="project" value="UniProtKB-KW"/>
</dbReference>
<dbReference type="GO" id="GO:0015948">
    <property type="term" value="P:methanogenesis"/>
    <property type="evidence" value="ECO:0007669"/>
    <property type="project" value="UniProtKB-KW"/>
</dbReference>
<dbReference type="Gene3D" id="1.20.1050.140">
    <property type="match status" value="1"/>
</dbReference>
<dbReference type="InterPro" id="IPR017678">
    <property type="entry name" value="CoB/CoM_hetero-S_Rdtase_bsu"/>
</dbReference>
<dbReference type="InterPro" id="IPR004017">
    <property type="entry name" value="Cys_rich_dom"/>
</dbReference>
<dbReference type="InterPro" id="IPR051278">
    <property type="entry name" value="HdrB/HdrD_reductase"/>
</dbReference>
<dbReference type="NCBIfam" id="TIGR03288">
    <property type="entry name" value="CoB_CoM_SS_B"/>
    <property type="match status" value="1"/>
</dbReference>
<dbReference type="PANTHER" id="PTHR42947">
    <property type="entry name" value="COB--COM HETERODISULFIDE REDUCTASE SUBUNIT B 1"/>
    <property type="match status" value="1"/>
</dbReference>
<dbReference type="PANTHER" id="PTHR42947:SF1">
    <property type="entry name" value="COB--COM HETERODISULFIDE REDUCTASE SUBUNIT B 1"/>
    <property type="match status" value="1"/>
</dbReference>
<dbReference type="Pfam" id="PF02754">
    <property type="entry name" value="CCG"/>
    <property type="match status" value="2"/>
</dbReference>
<keyword id="KW-0004">4Fe-4S</keyword>
<keyword id="KW-0963">Cytoplasm</keyword>
<keyword id="KW-0408">Iron</keyword>
<keyword id="KW-0411">Iron-sulfur</keyword>
<keyword id="KW-0479">Metal-binding</keyword>
<keyword id="KW-0484">Methanogenesis</keyword>
<keyword id="KW-0560">Oxidoreductase</keyword>
<keyword id="KW-1185">Reference proteome</keyword>
<protein>
    <recommendedName>
        <fullName evidence="3">Ferredoxin/F(420)H(2)-dependent CoB-CoM heterodisulfide reductase subunit B</fullName>
        <ecNumber evidence="1">1.8.7.3</ecNumber>
        <ecNumber evidence="1">1.8.98.4</ecNumber>
    </recommendedName>
    <alternativeName>
        <fullName evidence="3">Coenzyme F420:CoB-CoM heterodisulfide,ferredoxin reductase subunit B</fullName>
    </alternativeName>
    <alternativeName>
        <fullName evidence="3">Ferredoxin:CoB-CoM heterodisulfide reductase subunit B</fullName>
    </alternativeName>
</protein>
<name>HDRB2_METAC</name>
<comment type="function">
    <text evidence="1">Part of a complex that catalyzes the reversible reduction of CoM-S-S-CoB to the thiol-coenzymes H-S-CoM (coenzyme M) and H-S-CoB (coenzyme B). Catalyzes the transfer of electrons from ferredoxin to CoM-S-S-CoB during methanogenesis from acetate. Electrons transfer from ferredoxin to CoM-S-S-CoB via HdrA2, HdrC2 and HdrB2. In addition, the complex can use electron bifurcation to direct electron pairs from reduced coenzyme F420 towards the reduction of both ferredoxin and CoB-CoM heterodisulfide. This activity may take place during Fe(III)-dependent anaerobic methane oxidation.</text>
</comment>
<comment type="catalytic activity">
    <reaction evidence="1">
        <text>coenzyme B + coenzyme M + 2 oxidized [2Fe-2S]-[ferredoxin] = coenzyme M-coenzyme B heterodisulfide + 2 reduced [2Fe-2S]-[ferredoxin] + 2 H(+)</text>
        <dbReference type="Rhea" id="RHEA:55160"/>
        <dbReference type="Rhea" id="RHEA-COMP:10000"/>
        <dbReference type="Rhea" id="RHEA-COMP:10001"/>
        <dbReference type="ChEBI" id="CHEBI:15378"/>
        <dbReference type="ChEBI" id="CHEBI:33737"/>
        <dbReference type="ChEBI" id="CHEBI:33738"/>
        <dbReference type="ChEBI" id="CHEBI:58319"/>
        <dbReference type="ChEBI" id="CHEBI:58411"/>
        <dbReference type="ChEBI" id="CHEBI:58596"/>
        <dbReference type="EC" id="1.8.7.3"/>
    </reaction>
</comment>
<comment type="catalytic activity">
    <reaction evidence="1">
        <text>coenzyme B + 2 oxidized coenzyme F420-(gamma-L-Glu)(n) + coenzyme M + 2 reduced [2Fe-2S]-[ferredoxin] + 4 H(+) = coenzyme M-coenzyme B heterodisulfide + 2 reduced coenzyme F420-(gamma-L-Glu)(n) + 2 oxidized [2Fe-2S]-[ferredoxin]</text>
        <dbReference type="Rhea" id="RHEA:55744"/>
        <dbReference type="Rhea" id="RHEA-COMP:10000"/>
        <dbReference type="Rhea" id="RHEA-COMP:10001"/>
        <dbReference type="Rhea" id="RHEA-COMP:12939"/>
        <dbReference type="Rhea" id="RHEA-COMP:14378"/>
        <dbReference type="ChEBI" id="CHEBI:15378"/>
        <dbReference type="ChEBI" id="CHEBI:33737"/>
        <dbReference type="ChEBI" id="CHEBI:33738"/>
        <dbReference type="ChEBI" id="CHEBI:58319"/>
        <dbReference type="ChEBI" id="CHEBI:58411"/>
        <dbReference type="ChEBI" id="CHEBI:58596"/>
        <dbReference type="ChEBI" id="CHEBI:133980"/>
        <dbReference type="ChEBI" id="CHEBI:139511"/>
        <dbReference type="EC" id="1.8.98.4"/>
    </reaction>
</comment>
<comment type="cofactor">
    <cofactor evidence="1">
        <name>[4Fe-4S] cluster</name>
        <dbReference type="ChEBI" id="CHEBI:49883"/>
    </cofactor>
    <text evidence="1">Binds 1 [4Fe-4S] cluster.</text>
</comment>
<comment type="pathway">
    <text evidence="3">Cofactor metabolism; coenzyme M-coenzyme B heterodisulfide reduction; coenzyme B and coenzyme M from coenzyme M-coenzyme B heterodisulfide: step 1/1.</text>
</comment>
<comment type="subunit">
    <text evidence="1">The ferredoxin/F(420)H(2)-dependent CoB-CoM heterodisulfide reductase is composed of three subunits; HdrA2, HdrB2 and HdrC2.</text>
</comment>
<comment type="subcellular location">
    <subcellularLocation>
        <location evidence="1">Cytoplasm</location>
    </subcellularLocation>
</comment>
<comment type="similarity">
    <text evidence="3">Belongs to the HdrB family.</text>
</comment>